<gene>
    <name type="primary">HCF136</name>
    <name type="ordered locus">At5g23120</name>
    <name type="ORF">MYJ24.11</name>
</gene>
<reference key="1">
    <citation type="journal article" date="1998" name="EMBO J.">
        <title>A nuclear-encoded protein of prokaryotic origin is essential for the stability of photosystem II in Arabidopsis thaliana.</title>
        <authorList>
            <person name="Meurer J."/>
            <person name="Pluecken H."/>
            <person name="Kowallik K.V."/>
            <person name="Westhoff P."/>
        </authorList>
    </citation>
    <scope>NUCLEOTIDE SEQUENCE [MRNA]</scope>
    <scope>FUNCTION</scope>
    <scope>SUBCELLULAR LOCATION</scope>
    <scope>DISRUPTION PHENOTYPE</scope>
    <source>
        <strain>cv. Wassilewskija</strain>
        <tissue>Leaf</tissue>
    </source>
</reference>
<reference key="2">
    <citation type="journal article" date="1997" name="DNA Res.">
        <title>Structural analysis of Arabidopsis thaliana chromosome 5. II. Sequence features of the regions of 1,044,062 bp covered by thirteen physically assigned P1 clones.</title>
        <authorList>
            <person name="Kotani H."/>
            <person name="Nakamura Y."/>
            <person name="Sato S."/>
            <person name="Kaneko T."/>
            <person name="Asamizu E."/>
            <person name="Miyajima N."/>
            <person name="Tabata S."/>
        </authorList>
    </citation>
    <scope>NUCLEOTIDE SEQUENCE [LARGE SCALE GENOMIC DNA]</scope>
    <source>
        <strain>cv. Columbia</strain>
    </source>
</reference>
<reference key="3">
    <citation type="journal article" date="2017" name="Plant J.">
        <title>Araport11: a complete reannotation of the Arabidopsis thaliana reference genome.</title>
        <authorList>
            <person name="Cheng C.Y."/>
            <person name="Krishnakumar V."/>
            <person name="Chan A.P."/>
            <person name="Thibaud-Nissen F."/>
            <person name="Schobel S."/>
            <person name="Town C.D."/>
        </authorList>
    </citation>
    <scope>GENOME REANNOTATION</scope>
    <source>
        <strain>cv. Columbia</strain>
    </source>
</reference>
<reference key="4">
    <citation type="journal article" date="2003" name="Science">
        <title>Empirical analysis of transcriptional activity in the Arabidopsis genome.</title>
        <authorList>
            <person name="Yamada K."/>
            <person name="Lim J."/>
            <person name="Dale J.M."/>
            <person name="Chen H."/>
            <person name="Shinn P."/>
            <person name="Palm C.J."/>
            <person name="Southwick A.M."/>
            <person name="Wu H.C."/>
            <person name="Kim C.J."/>
            <person name="Nguyen M."/>
            <person name="Pham P.K."/>
            <person name="Cheuk R.F."/>
            <person name="Karlin-Newmann G."/>
            <person name="Liu S.X."/>
            <person name="Lam B."/>
            <person name="Sakano H."/>
            <person name="Wu T."/>
            <person name="Yu G."/>
            <person name="Miranda M."/>
            <person name="Quach H.L."/>
            <person name="Tripp M."/>
            <person name="Chang C.H."/>
            <person name="Lee J.M."/>
            <person name="Toriumi M.J."/>
            <person name="Chan M.M."/>
            <person name="Tang C.C."/>
            <person name="Onodera C.S."/>
            <person name="Deng J.M."/>
            <person name="Akiyama K."/>
            <person name="Ansari Y."/>
            <person name="Arakawa T."/>
            <person name="Banh J."/>
            <person name="Banno F."/>
            <person name="Bowser L."/>
            <person name="Brooks S.Y."/>
            <person name="Carninci P."/>
            <person name="Chao Q."/>
            <person name="Choy N."/>
            <person name="Enju A."/>
            <person name="Goldsmith A.D."/>
            <person name="Gurjal M."/>
            <person name="Hansen N.F."/>
            <person name="Hayashizaki Y."/>
            <person name="Johnson-Hopson C."/>
            <person name="Hsuan V.W."/>
            <person name="Iida K."/>
            <person name="Karnes M."/>
            <person name="Khan S."/>
            <person name="Koesema E."/>
            <person name="Ishida J."/>
            <person name="Jiang P.X."/>
            <person name="Jones T."/>
            <person name="Kawai J."/>
            <person name="Kamiya A."/>
            <person name="Meyers C."/>
            <person name="Nakajima M."/>
            <person name="Narusaka M."/>
            <person name="Seki M."/>
            <person name="Sakurai T."/>
            <person name="Satou M."/>
            <person name="Tamse R."/>
            <person name="Vaysberg M."/>
            <person name="Wallender E.K."/>
            <person name="Wong C."/>
            <person name="Yamamura Y."/>
            <person name="Yuan S."/>
            <person name="Shinozaki K."/>
            <person name="Davis R.W."/>
            <person name="Theologis A."/>
            <person name="Ecker J.R."/>
        </authorList>
    </citation>
    <scope>NUCLEOTIDE SEQUENCE [LARGE SCALE MRNA]</scope>
    <source>
        <strain>cv. Columbia</strain>
    </source>
</reference>
<reference key="5">
    <citation type="submission" date="2005-03" db="EMBL/GenBank/DDBJ databases">
        <title>Large-scale analysis of RIKEN Arabidopsis full-length (RAFL) cDNAs.</title>
        <authorList>
            <person name="Totoki Y."/>
            <person name="Seki M."/>
            <person name="Ishida J."/>
            <person name="Nakajima M."/>
            <person name="Enju A."/>
            <person name="Kamiya A."/>
            <person name="Narusaka M."/>
            <person name="Shin-i T."/>
            <person name="Nakagawa M."/>
            <person name="Sakamoto N."/>
            <person name="Oishi K."/>
            <person name="Kohara Y."/>
            <person name="Kobayashi M."/>
            <person name="Toyoda A."/>
            <person name="Sakaki Y."/>
            <person name="Sakurai T."/>
            <person name="Iida K."/>
            <person name="Akiyama K."/>
            <person name="Satou M."/>
            <person name="Toyoda T."/>
            <person name="Konagaya A."/>
            <person name="Carninci P."/>
            <person name="Kawai J."/>
            <person name="Hayashizaki Y."/>
            <person name="Shinozaki K."/>
        </authorList>
    </citation>
    <scope>NUCLEOTIDE SEQUENCE [LARGE SCALE MRNA] OF 333-403</scope>
    <source>
        <strain>cv. Columbia</strain>
    </source>
</reference>
<reference key="6">
    <citation type="journal article" date="2002" name="J. Biol. Chem.">
        <title>Proteome map of the chloroplast lumen of Arabidopsis thaliana.</title>
        <authorList>
            <person name="Schubert M."/>
            <person name="Petersson U.A."/>
            <person name="Haas B.J."/>
            <person name="Funk C."/>
            <person name="Schroeder W.P."/>
            <person name="Kieselbach T."/>
        </authorList>
    </citation>
    <scope>PROTEIN SEQUENCE OF 79-93</scope>
    <scope>SUBCELLULAR LOCATION</scope>
</reference>
<reference key="7">
    <citation type="journal article" date="2002" name="Plant Cell">
        <title>Central functions of the lumenal and peripheral thylakoid proteome of Arabidopsis determined by experimentation and genome-wide prediction.</title>
        <authorList>
            <person name="Peltier J.-B."/>
            <person name="Emanuelsson O."/>
            <person name="Kalume D.E."/>
            <person name="Ytterberg J."/>
            <person name="Friso G."/>
            <person name="Rudella A."/>
            <person name="Liberles D.A."/>
            <person name="Soederberg L."/>
            <person name="Roepstorff P."/>
            <person name="von Heijne G."/>
            <person name="van Wijk K.J."/>
        </authorList>
    </citation>
    <scope>PROTEIN SEQUENCE OF N-TERMINUS</scope>
    <scope>IDENTIFICATION BY MASS SPECTROMETRY</scope>
</reference>
<reference key="8">
    <citation type="journal article" date="2000" name="FEBS Lett.">
        <title>Different lumen-targeting pathways for nuclear-encoded versus cyanobacterial/plastid-encoded Hcf136 proteins.</title>
        <authorList>
            <person name="Hynds P.J."/>
            <person name="Pluecken H."/>
            <person name="Westhoff P."/>
            <person name="Robinson C."/>
        </authorList>
    </citation>
    <scope>IN VITRO IMPORT INTO PEA CHLOROPLASTS</scope>
    <scope>MUTAGENESIS OF 55-ARG-ARG-56</scope>
</reference>
<reference key="9">
    <citation type="journal article" date="2002" name="FEBS Lett.">
        <title>The HCF136 protein is essential for assembly of the photosystem II reaction center in Arabidopsis thaliana.</title>
        <authorList>
            <person name="Pluecken H."/>
            <person name="Mueller B."/>
            <person name="Grohmann D."/>
            <person name="Westhoff P."/>
            <person name="Eichacker L.A."/>
        </authorList>
    </citation>
    <scope>FUNCTION IN EARLY ASSEMBLY OF PHOTOSYSTEM II</scope>
</reference>
<reference key="10">
    <citation type="journal article" date="2008" name="PLoS ONE">
        <title>Sorting signals, N-terminal modifications and abundance of the chloroplast proteome.</title>
        <authorList>
            <person name="Zybailov B."/>
            <person name="Rutschow H."/>
            <person name="Friso G."/>
            <person name="Rudella A."/>
            <person name="Emanuelsson O."/>
            <person name="Sun Q."/>
            <person name="van Wijk K.J."/>
        </authorList>
    </citation>
    <scope>IDENTIFICATION BY MASS SPECTROMETRY</scope>
    <scope>SUBCELLULAR LOCATION [LARGE SCALE ANALYSIS]</scope>
</reference>
<reference key="11">
    <citation type="journal article" date="2010" name="Plant Cell">
        <title>The Arabidopsis thylakoid protein PAM68 is required for efficient D1 biogenesis and photosystem II assembly.</title>
        <authorList>
            <person name="Armbruster U."/>
            <person name="Zuhlke J."/>
            <person name="Rengstl B."/>
            <person name="Kreller R."/>
            <person name="Makarenko E."/>
            <person name="Ruhle T."/>
            <person name="Schunemann D."/>
            <person name="Jahns P."/>
            <person name="Weisshaar B."/>
            <person name="Nickelsen J."/>
            <person name="Leister D."/>
        </authorList>
    </citation>
    <scope>INTERACTION WITH PAM68</scope>
</reference>
<keyword id="KW-0150">Chloroplast</keyword>
<keyword id="KW-0903">Direct protein sequencing</keyword>
<keyword id="KW-0602">Photosynthesis</keyword>
<keyword id="KW-0604">Photosystem II</keyword>
<keyword id="KW-0934">Plastid</keyword>
<keyword id="KW-1185">Reference proteome</keyword>
<keyword id="KW-0793">Thylakoid</keyword>
<keyword id="KW-0809">Transit peptide</keyword>
<sequence length="403" mass="44104">MASLQLCDGYLLFKPSVSPRFLSQRISHRLIPKASSSPPPSPSPSSSSSSLSFSRRELLYQSAAVSLSLSSIVGPARADEQLSEWERVFLPIDPGVVLLDIAFVPDEPSRGFLLGTRQTLLETKDGGSTWNPRSIPSAEEEDFNYRFNSISFKGKEGWIIGKPAILLYTADAGENWDRIPLSSQLPGDMVFIKATEDKSAEMVTDEGAIYVTSNRGYNWKAAIQETVSATLNRTVSSGISGASYYTGTFSAVNRSPDGRYVAVSSRGNFFLTWEPGQPYWQPHNRAVARRIQNMGWRADGGLWLLVRGGGLYLSKGTGITEEFEEVPVQSRGFGILDVGYRSEEEAWAAGGSGILLRTRNGGKSWNRDKAADNIAANLYAVKFVDDKKGFVLGNDGVLLRYVG</sequence>
<accession>O82660</accession>
<accession>Q56Z72</accession>
<proteinExistence type="evidence at protein level"/>
<comment type="function">
    <text evidence="6 7 10">Essential for photosystem II (PSII) biogenesis; required for assembly of an early intermediate in PSII assembly that includes D2 (psbD) and cytochrome b559. Has been suggested (PubMed:11826309) to be required for chlorophyll a binding.</text>
</comment>
<comment type="subunit">
    <text evidence="9">Interacts with PAM68.</text>
</comment>
<comment type="subcellular location">
    <subcellularLocation>
        <location evidence="5 8 10">Plastid</location>
        <location evidence="5 8 10">Chloroplast thylakoid lumen</location>
    </subcellularLocation>
    <text evidence="4 10 12 13">Restricted to the stromal lamellae (PubMed:9736608). Translocation into the thylakoid lumen occurs via the Tat pathway (Probable) (PubMed:10664464).</text>
</comment>
<comment type="tissue specificity">
    <text>Expression in green tissue, not roots.</text>
</comment>
<comment type="developmental stage">
    <text evidence="10">Also accumulates in dark-grown seedlings.</text>
</comment>
<comment type="domain">
    <text evidence="1">A 7-bladed beta-propeller torus, about 54 by 55 Angstroms, with a depth of about 25 Angstroms and a central pore.</text>
</comment>
<comment type="disruption phenotype">
    <text evidence="10">Seedling lethal when homozygous, has pale cotyledons but never develops true leaves. On sucrose-supplemented medium PSII is completely inactive; D1, D2 CP43 and CP47 are present in very low amounts.</text>
</comment>
<comment type="similarity">
    <text evidence="11">Belongs to the Ycf48 family.</text>
</comment>
<protein>
    <recommendedName>
        <fullName>Photosystem II stability/assembly factor HCF136, chloroplastic</fullName>
    </recommendedName>
</protein>
<dbReference type="EMBL" id="Y15628">
    <property type="protein sequence ID" value="CAA75723.1"/>
    <property type="molecule type" value="mRNA"/>
</dbReference>
<dbReference type="EMBL" id="AB006708">
    <property type="protein sequence ID" value="BAB09829.1"/>
    <property type="molecule type" value="Genomic_DNA"/>
</dbReference>
<dbReference type="EMBL" id="CP002688">
    <property type="protein sequence ID" value="AED93124.1"/>
    <property type="molecule type" value="Genomic_DNA"/>
</dbReference>
<dbReference type="EMBL" id="AY045691">
    <property type="protein sequence ID" value="AAK74049.1"/>
    <property type="molecule type" value="mRNA"/>
</dbReference>
<dbReference type="EMBL" id="BT004549">
    <property type="protein sequence ID" value="AAO42795.1"/>
    <property type="molecule type" value="mRNA"/>
</dbReference>
<dbReference type="EMBL" id="AK221097">
    <property type="protein sequence ID" value="BAD94976.1"/>
    <property type="molecule type" value="mRNA"/>
</dbReference>
<dbReference type="PIR" id="T51828">
    <property type="entry name" value="T51828"/>
</dbReference>
<dbReference type="RefSeq" id="NP_197703.1">
    <property type="nucleotide sequence ID" value="NM_122218.3"/>
</dbReference>
<dbReference type="SMR" id="O82660"/>
<dbReference type="BioGRID" id="17651">
    <property type="interactions" value="4"/>
</dbReference>
<dbReference type="FunCoup" id="O82660">
    <property type="interactions" value="1485"/>
</dbReference>
<dbReference type="IntAct" id="O82660">
    <property type="interactions" value="4"/>
</dbReference>
<dbReference type="STRING" id="3702.O82660"/>
<dbReference type="PaxDb" id="3702-AT5G23120.1"/>
<dbReference type="ProteomicsDB" id="248814"/>
<dbReference type="EnsemblPlants" id="AT5G23120.1">
    <property type="protein sequence ID" value="AT5G23120.1"/>
    <property type="gene ID" value="AT5G23120"/>
</dbReference>
<dbReference type="GeneID" id="832376"/>
<dbReference type="Gramene" id="AT5G23120.1">
    <property type="protein sequence ID" value="AT5G23120.1"/>
    <property type="gene ID" value="AT5G23120"/>
</dbReference>
<dbReference type="KEGG" id="ath:AT5G23120"/>
<dbReference type="Araport" id="AT5G23120"/>
<dbReference type="TAIR" id="AT5G23120">
    <property type="gene designation" value="HCF136"/>
</dbReference>
<dbReference type="eggNOG" id="KOG3511">
    <property type="taxonomic scope" value="Eukaryota"/>
</dbReference>
<dbReference type="HOGENOM" id="CLU_057027_0_0_1"/>
<dbReference type="InParanoid" id="O82660"/>
<dbReference type="PhylomeDB" id="O82660"/>
<dbReference type="CD-CODE" id="4299E36E">
    <property type="entry name" value="Nucleolus"/>
</dbReference>
<dbReference type="PRO" id="PR:O82660"/>
<dbReference type="Proteomes" id="UP000006548">
    <property type="component" value="Chromosome 5"/>
</dbReference>
<dbReference type="ExpressionAtlas" id="O82660">
    <property type="expression patterns" value="baseline and differential"/>
</dbReference>
<dbReference type="GO" id="GO:0009507">
    <property type="term" value="C:chloroplast"/>
    <property type="evidence" value="ECO:0007005"/>
    <property type="project" value="TAIR"/>
</dbReference>
<dbReference type="GO" id="GO:0009941">
    <property type="term" value="C:chloroplast envelope"/>
    <property type="evidence" value="ECO:0007005"/>
    <property type="project" value="TAIR"/>
</dbReference>
<dbReference type="GO" id="GO:0009570">
    <property type="term" value="C:chloroplast stroma"/>
    <property type="evidence" value="ECO:0007005"/>
    <property type="project" value="TAIR"/>
</dbReference>
<dbReference type="GO" id="GO:0009533">
    <property type="term" value="C:chloroplast stromal thylakoid"/>
    <property type="evidence" value="ECO:0000314"/>
    <property type="project" value="TAIR"/>
</dbReference>
<dbReference type="GO" id="GO:0009534">
    <property type="term" value="C:chloroplast thylakoid"/>
    <property type="evidence" value="ECO:0007005"/>
    <property type="project" value="TAIR"/>
</dbReference>
<dbReference type="GO" id="GO:0009543">
    <property type="term" value="C:chloroplast thylakoid lumen"/>
    <property type="evidence" value="ECO:0000314"/>
    <property type="project" value="TAIR"/>
</dbReference>
<dbReference type="GO" id="GO:0009535">
    <property type="term" value="C:chloroplast thylakoid membrane"/>
    <property type="evidence" value="ECO:0007005"/>
    <property type="project" value="TAIR"/>
</dbReference>
<dbReference type="GO" id="GO:0009523">
    <property type="term" value="C:photosystem II"/>
    <property type="evidence" value="ECO:0007669"/>
    <property type="project" value="UniProtKB-KW"/>
</dbReference>
<dbReference type="GO" id="GO:0009536">
    <property type="term" value="C:plastid"/>
    <property type="evidence" value="ECO:0007005"/>
    <property type="project" value="TAIR"/>
</dbReference>
<dbReference type="GO" id="GO:0009579">
    <property type="term" value="C:thylakoid"/>
    <property type="evidence" value="ECO:0007005"/>
    <property type="project" value="TAIR"/>
</dbReference>
<dbReference type="GO" id="GO:0031977">
    <property type="term" value="C:thylakoid lumen"/>
    <property type="evidence" value="ECO:0007005"/>
    <property type="project" value="TAIR"/>
</dbReference>
<dbReference type="GO" id="GO:0015979">
    <property type="term" value="P:photosynthesis"/>
    <property type="evidence" value="ECO:0007669"/>
    <property type="project" value="UniProtKB-KW"/>
</dbReference>
<dbReference type="GO" id="GO:0009657">
    <property type="term" value="P:plastid organization"/>
    <property type="evidence" value="ECO:0000315"/>
    <property type="project" value="TAIR"/>
</dbReference>
<dbReference type="GO" id="GO:0065003">
    <property type="term" value="P:protein-containing complex assembly"/>
    <property type="evidence" value="ECO:0000315"/>
    <property type="project" value="TAIR"/>
</dbReference>
<dbReference type="Gene3D" id="2.130.10.10">
    <property type="entry name" value="YVTN repeat-like/Quinoprotein amine dehydrogenase"/>
    <property type="match status" value="1"/>
</dbReference>
<dbReference type="InterPro" id="IPR028203">
    <property type="entry name" value="PSII_CF48-like_dom"/>
</dbReference>
<dbReference type="InterPro" id="IPR015943">
    <property type="entry name" value="WD40/YVTN_repeat-like_dom_sf"/>
</dbReference>
<dbReference type="InterPro" id="IPR016705">
    <property type="entry name" value="Ycf48/Hcf136"/>
</dbReference>
<dbReference type="NCBIfam" id="NF010237">
    <property type="entry name" value="PRK13684.1"/>
    <property type="match status" value="1"/>
</dbReference>
<dbReference type="PANTHER" id="PTHR47199">
    <property type="entry name" value="PHOTOSYSTEM II STABILITY/ASSEMBLY FACTOR HCF136, CHLOROPLASTIC"/>
    <property type="match status" value="1"/>
</dbReference>
<dbReference type="PANTHER" id="PTHR47199:SF2">
    <property type="entry name" value="PHOTOSYSTEM II STABILITY_ASSEMBLY FACTOR HCF136, CHLOROPLASTIC"/>
    <property type="match status" value="1"/>
</dbReference>
<dbReference type="Pfam" id="PF14870">
    <property type="entry name" value="PSII_BNR"/>
    <property type="match status" value="1"/>
</dbReference>
<dbReference type="PIRSF" id="PIRSF017875">
    <property type="entry name" value="PSII_HCF136"/>
    <property type="match status" value="1"/>
</dbReference>
<dbReference type="SUPFAM" id="SSF110296">
    <property type="entry name" value="Oligoxyloglucan reducing end-specific cellobiohydrolase"/>
    <property type="match status" value="1"/>
</dbReference>
<evidence type="ECO:0000250" key="1">
    <source>
        <dbReference type="UniProtKB" id="M1VJU3"/>
    </source>
</evidence>
<evidence type="ECO:0000255" key="2"/>
<evidence type="ECO:0000256" key="3">
    <source>
        <dbReference type="SAM" id="MobiDB-lite"/>
    </source>
</evidence>
<evidence type="ECO:0000269" key="4">
    <source>
    </source>
</evidence>
<evidence type="ECO:0000269" key="5">
    <source>
    </source>
</evidence>
<evidence type="ECO:0000269" key="6">
    <source>
    </source>
</evidence>
<evidence type="ECO:0000269" key="7">
    <source>
    </source>
</evidence>
<evidence type="ECO:0000269" key="8">
    <source>
    </source>
</evidence>
<evidence type="ECO:0000269" key="9">
    <source>
    </source>
</evidence>
<evidence type="ECO:0000269" key="10">
    <source>
    </source>
</evidence>
<evidence type="ECO:0000305" key="11"/>
<evidence type="ECO:0000305" key="12">
    <source>
    </source>
</evidence>
<evidence type="ECO:0000305" key="13">
    <source>
    </source>
</evidence>
<feature type="transit peptide" description="Chloroplast" evidence="2">
    <location>
        <begin position="1"/>
        <end position="53"/>
    </location>
</feature>
<feature type="transit peptide" description="Thylakoid" evidence="5 6">
    <location>
        <begin position="54"/>
        <end position="78"/>
    </location>
</feature>
<feature type="chain" id="PRO_0000005341" description="Photosystem II stability/assembly factor HCF136, chloroplastic">
    <location>
        <begin position="79"/>
        <end position="403"/>
    </location>
</feature>
<feature type="region of interest" description="Disordered" evidence="3">
    <location>
        <begin position="31"/>
        <end position="50"/>
    </location>
</feature>
<feature type="mutagenesis site" description="Protein is imported into chloroplasts but is unable to translocate into the thylakoid lumen." evidence="4">
    <original>RR</original>
    <variation>KK</variation>
    <location>
        <begin position="55"/>
        <end position="56"/>
    </location>
</feature>
<name>P2SAF_ARATH</name>
<organism>
    <name type="scientific">Arabidopsis thaliana</name>
    <name type="common">Mouse-ear cress</name>
    <dbReference type="NCBI Taxonomy" id="3702"/>
    <lineage>
        <taxon>Eukaryota</taxon>
        <taxon>Viridiplantae</taxon>
        <taxon>Streptophyta</taxon>
        <taxon>Embryophyta</taxon>
        <taxon>Tracheophyta</taxon>
        <taxon>Spermatophyta</taxon>
        <taxon>Magnoliopsida</taxon>
        <taxon>eudicotyledons</taxon>
        <taxon>Gunneridae</taxon>
        <taxon>Pentapetalae</taxon>
        <taxon>rosids</taxon>
        <taxon>malvids</taxon>
        <taxon>Brassicales</taxon>
        <taxon>Brassicaceae</taxon>
        <taxon>Camelineae</taxon>
        <taxon>Arabidopsis</taxon>
    </lineage>
</organism>